<accession>Q9JU26</accession>
<accession>A1ISC4</accession>
<organism>
    <name type="scientific">Neisseria meningitidis serogroup A / serotype 4A (strain DSM 15465 / Z2491)</name>
    <dbReference type="NCBI Taxonomy" id="122587"/>
    <lineage>
        <taxon>Bacteria</taxon>
        <taxon>Pseudomonadati</taxon>
        <taxon>Pseudomonadota</taxon>
        <taxon>Betaproteobacteria</taxon>
        <taxon>Neisseriales</taxon>
        <taxon>Neisseriaceae</taxon>
        <taxon>Neisseria</taxon>
    </lineage>
</organism>
<evidence type="ECO:0000255" key="1">
    <source>
        <dbReference type="HAMAP-Rule" id="MF_00503"/>
    </source>
</evidence>
<evidence type="ECO:0000305" key="2"/>
<keyword id="KW-0687">Ribonucleoprotein</keyword>
<keyword id="KW-0689">Ribosomal protein</keyword>
<keyword id="KW-0694">RNA-binding</keyword>
<keyword id="KW-0699">rRNA-binding</keyword>
<proteinExistence type="inferred from homology"/>
<name>RL9_NEIMA</name>
<comment type="function">
    <text evidence="1">Binds to the 23S rRNA.</text>
</comment>
<comment type="similarity">
    <text evidence="1">Belongs to the bacterial ribosomal protein bL9 family.</text>
</comment>
<dbReference type="EMBL" id="AL157959">
    <property type="protein sequence ID" value="CAM08680.1"/>
    <property type="molecule type" value="Genomic_DNA"/>
</dbReference>
<dbReference type="PIR" id="A81845">
    <property type="entry name" value="A81845"/>
</dbReference>
<dbReference type="RefSeq" id="WP_002235866.1">
    <property type="nucleotide sequence ID" value="NC_003116.1"/>
</dbReference>
<dbReference type="SMR" id="Q9JU26"/>
<dbReference type="EnsemblBacteria" id="CAM08680">
    <property type="protein sequence ID" value="CAM08680"/>
    <property type="gene ID" value="NMA1534"/>
</dbReference>
<dbReference type="GeneID" id="93385880"/>
<dbReference type="KEGG" id="nma:NMA1534"/>
<dbReference type="HOGENOM" id="CLU_078938_4_1_4"/>
<dbReference type="Proteomes" id="UP000000626">
    <property type="component" value="Chromosome"/>
</dbReference>
<dbReference type="GO" id="GO:1990904">
    <property type="term" value="C:ribonucleoprotein complex"/>
    <property type="evidence" value="ECO:0007669"/>
    <property type="project" value="UniProtKB-KW"/>
</dbReference>
<dbReference type="GO" id="GO:0005840">
    <property type="term" value="C:ribosome"/>
    <property type="evidence" value="ECO:0007669"/>
    <property type="project" value="UniProtKB-KW"/>
</dbReference>
<dbReference type="GO" id="GO:0019843">
    <property type="term" value="F:rRNA binding"/>
    <property type="evidence" value="ECO:0007669"/>
    <property type="project" value="UniProtKB-UniRule"/>
</dbReference>
<dbReference type="GO" id="GO:0003735">
    <property type="term" value="F:structural constituent of ribosome"/>
    <property type="evidence" value="ECO:0007669"/>
    <property type="project" value="InterPro"/>
</dbReference>
<dbReference type="GO" id="GO:0006412">
    <property type="term" value="P:translation"/>
    <property type="evidence" value="ECO:0007669"/>
    <property type="project" value="UniProtKB-UniRule"/>
</dbReference>
<dbReference type="FunFam" id="3.10.430.100:FF:000010">
    <property type="entry name" value="50S ribosomal protein L9"/>
    <property type="match status" value="1"/>
</dbReference>
<dbReference type="Gene3D" id="3.10.430.100">
    <property type="entry name" value="Ribosomal protein L9, C-terminal domain"/>
    <property type="match status" value="1"/>
</dbReference>
<dbReference type="Gene3D" id="3.40.5.10">
    <property type="entry name" value="Ribosomal protein L9, N-terminal domain"/>
    <property type="match status" value="1"/>
</dbReference>
<dbReference type="HAMAP" id="MF_00503">
    <property type="entry name" value="Ribosomal_bL9"/>
    <property type="match status" value="1"/>
</dbReference>
<dbReference type="InterPro" id="IPR000244">
    <property type="entry name" value="Ribosomal_bL9"/>
</dbReference>
<dbReference type="InterPro" id="IPR009027">
    <property type="entry name" value="Ribosomal_bL9/RNase_H1_N"/>
</dbReference>
<dbReference type="InterPro" id="IPR020594">
    <property type="entry name" value="Ribosomal_bL9_bac/chp"/>
</dbReference>
<dbReference type="InterPro" id="IPR020069">
    <property type="entry name" value="Ribosomal_bL9_C"/>
</dbReference>
<dbReference type="InterPro" id="IPR036791">
    <property type="entry name" value="Ribosomal_bL9_C_sf"/>
</dbReference>
<dbReference type="InterPro" id="IPR020070">
    <property type="entry name" value="Ribosomal_bL9_N"/>
</dbReference>
<dbReference type="InterPro" id="IPR036935">
    <property type="entry name" value="Ribosomal_bL9_N_sf"/>
</dbReference>
<dbReference type="NCBIfam" id="TIGR00158">
    <property type="entry name" value="L9"/>
    <property type="match status" value="1"/>
</dbReference>
<dbReference type="PANTHER" id="PTHR21368">
    <property type="entry name" value="50S RIBOSOMAL PROTEIN L9"/>
    <property type="match status" value="1"/>
</dbReference>
<dbReference type="Pfam" id="PF03948">
    <property type="entry name" value="Ribosomal_L9_C"/>
    <property type="match status" value="1"/>
</dbReference>
<dbReference type="Pfam" id="PF01281">
    <property type="entry name" value="Ribosomal_L9_N"/>
    <property type="match status" value="1"/>
</dbReference>
<dbReference type="SUPFAM" id="SSF55658">
    <property type="entry name" value="L9 N-domain-like"/>
    <property type="match status" value="1"/>
</dbReference>
<dbReference type="SUPFAM" id="SSF55653">
    <property type="entry name" value="Ribosomal protein L9 C-domain"/>
    <property type="match status" value="1"/>
</dbReference>
<dbReference type="PROSITE" id="PS00651">
    <property type="entry name" value="RIBOSOMAL_L9"/>
    <property type="match status" value="1"/>
</dbReference>
<gene>
    <name evidence="1" type="primary">rplI</name>
    <name type="ordered locus">NMA1534</name>
</gene>
<protein>
    <recommendedName>
        <fullName evidence="1">Large ribosomal subunit protein bL9</fullName>
    </recommendedName>
    <alternativeName>
        <fullName evidence="2">50S ribosomal protein L9</fullName>
    </alternativeName>
</protein>
<feature type="chain" id="PRO_0000176658" description="Large ribosomal subunit protein bL9">
    <location>
        <begin position="1"/>
        <end position="150"/>
    </location>
</feature>
<reference key="1">
    <citation type="journal article" date="2000" name="Nature">
        <title>Complete DNA sequence of a serogroup A strain of Neisseria meningitidis Z2491.</title>
        <authorList>
            <person name="Parkhill J."/>
            <person name="Achtman M."/>
            <person name="James K.D."/>
            <person name="Bentley S.D."/>
            <person name="Churcher C.M."/>
            <person name="Klee S.R."/>
            <person name="Morelli G."/>
            <person name="Basham D."/>
            <person name="Brown D."/>
            <person name="Chillingworth T."/>
            <person name="Davies R.M."/>
            <person name="Davis P."/>
            <person name="Devlin K."/>
            <person name="Feltwell T."/>
            <person name="Hamlin N."/>
            <person name="Holroyd S."/>
            <person name="Jagels K."/>
            <person name="Leather S."/>
            <person name="Moule S."/>
            <person name="Mungall K.L."/>
            <person name="Quail M.A."/>
            <person name="Rajandream M.A."/>
            <person name="Rutherford K.M."/>
            <person name="Simmonds M."/>
            <person name="Skelton J."/>
            <person name="Whitehead S."/>
            <person name="Spratt B.G."/>
            <person name="Barrell B.G."/>
        </authorList>
    </citation>
    <scope>NUCLEOTIDE SEQUENCE [LARGE SCALE GENOMIC DNA]</scope>
    <source>
        <strain>DSM 15465 / Z2491</strain>
    </source>
</reference>
<sequence>MQIILLEKIGGLGNLGDIVTVKNGYARNFLIPAGKAKRATEANMKEFEARRAELEAKQAEILADARVRQEKLDGQTITVAQKAGVDGRLFGSVTNADIAAAIVAAGIEAVKANVRLPNGPLKAVGEYEVEVALHTDAVAKITVAVVAATE</sequence>